<dbReference type="EC" id="3.6.1.-" evidence="1"/>
<dbReference type="EMBL" id="CP000284">
    <property type="protein sequence ID" value="ABE50390.1"/>
    <property type="molecule type" value="Genomic_DNA"/>
</dbReference>
<dbReference type="RefSeq" id="WP_011480344.1">
    <property type="nucleotide sequence ID" value="NC_007947.1"/>
</dbReference>
<dbReference type="SMR" id="Q1GZE7"/>
<dbReference type="STRING" id="265072.Mfla_2123"/>
<dbReference type="KEGG" id="mfa:Mfla_2123"/>
<dbReference type="eggNOG" id="COG0494">
    <property type="taxonomic scope" value="Bacteria"/>
</dbReference>
<dbReference type="HOGENOM" id="CLU_087195_3_1_4"/>
<dbReference type="OrthoDB" id="9816040at2"/>
<dbReference type="Proteomes" id="UP000002440">
    <property type="component" value="Chromosome"/>
</dbReference>
<dbReference type="GO" id="GO:0016462">
    <property type="term" value="F:pyrophosphatase activity"/>
    <property type="evidence" value="ECO:0007669"/>
    <property type="project" value="UniProtKB-ARBA"/>
</dbReference>
<dbReference type="CDD" id="cd03671">
    <property type="entry name" value="NUDIX_Ap4A_hydrolase_plant_like"/>
    <property type="match status" value="1"/>
</dbReference>
<dbReference type="FunFam" id="3.90.79.10:FF:000001">
    <property type="entry name" value="RNA pyrophosphohydrolase"/>
    <property type="match status" value="1"/>
</dbReference>
<dbReference type="Gene3D" id="3.90.79.10">
    <property type="entry name" value="Nucleoside Triphosphate Pyrophosphohydrolase"/>
    <property type="match status" value="1"/>
</dbReference>
<dbReference type="HAMAP" id="MF_00298">
    <property type="entry name" value="Nudix_RppH"/>
    <property type="match status" value="1"/>
</dbReference>
<dbReference type="InterPro" id="IPR020476">
    <property type="entry name" value="Nudix_hydrolase"/>
</dbReference>
<dbReference type="InterPro" id="IPR015797">
    <property type="entry name" value="NUDIX_hydrolase-like_dom_sf"/>
</dbReference>
<dbReference type="InterPro" id="IPR020084">
    <property type="entry name" value="NUDIX_hydrolase_CS"/>
</dbReference>
<dbReference type="InterPro" id="IPR000086">
    <property type="entry name" value="NUDIX_hydrolase_dom"/>
</dbReference>
<dbReference type="InterPro" id="IPR022927">
    <property type="entry name" value="RppH"/>
</dbReference>
<dbReference type="NCBIfam" id="NF001935">
    <property type="entry name" value="PRK00714.1-2"/>
    <property type="match status" value="1"/>
</dbReference>
<dbReference type="NCBIfam" id="NF001937">
    <property type="entry name" value="PRK00714.1-4"/>
    <property type="match status" value="1"/>
</dbReference>
<dbReference type="NCBIfam" id="NF001938">
    <property type="entry name" value="PRK00714.1-5"/>
    <property type="match status" value="1"/>
</dbReference>
<dbReference type="PANTHER" id="PTHR43736">
    <property type="entry name" value="ADP-RIBOSE PYROPHOSPHATASE"/>
    <property type="match status" value="1"/>
</dbReference>
<dbReference type="PANTHER" id="PTHR43736:SF1">
    <property type="entry name" value="DIHYDRONEOPTERIN TRIPHOSPHATE DIPHOSPHATASE"/>
    <property type="match status" value="1"/>
</dbReference>
<dbReference type="Pfam" id="PF00293">
    <property type="entry name" value="NUDIX"/>
    <property type="match status" value="1"/>
</dbReference>
<dbReference type="PRINTS" id="PR00502">
    <property type="entry name" value="NUDIXFAMILY"/>
</dbReference>
<dbReference type="SUPFAM" id="SSF55811">
    <property type="entry name" value="Nudix"/>
    <property type="match status" value="1"/>
</dbReference>
<dbReference type="PROSITE" id="PS51462">
    <property type="entry name" value="NUDIX"/>
    <property type="match status" value="1"/>
</dbReference>
<dbReference type="PROSITE" id="PS00893">
    <property type="entry name" value="NUDIX_BOX"/>
    <property type="match status" value="1"/>
</dbReference>
<organism>
    <name type="scientific">Methylobacillus flagellatus (strain ATCC 51484 / DSM 6875 / VKM B-1610 / KT)</name>
    <dbReference type="NCBI Taxonomy" id="265072"/>
    <lineage>
        <taxon>Bacteria</taxon>
        <taxon>Pseudomonadati</taxon>
        <taxon>Pseudomonadota</taxon>
        <taxon>Betaproteobacteria</taxon>
        <taxon>Nitrosomonadales</taxon>
        <taxon>Methylophilaceae</taxon>
        <taxon>Methylobacillus</taxon>
    </lineage>
</organism>
<reference key="1">
    <citation type="submission" date="2006-03" db="EMBL/GenBank/DDBJ databases">
        <title>Complete sequence of Methylobacillus flagellatus KT.</title>
        <authorList>
            <consortium name="US DOE Joint Genome Institute"/>
            <person name="Copeland A."/>
            <person name="Lucas S."/>
            <person name="Lapidus A."/>
            <person name="Barry K."/>
            <person name="Detter J.C."/>
            <person name="Glavina del Rio T."/>
            <person name="Hammon N."/>
            <person name="Israni S."/>
            <person name="Dalin E."/>
            <person name="Tice H."/>
            <person name="Pitluck S."/>
            <person name="Brettin T."/>
            <person name="Bruce D."/>
            <person name="Han C."/>
            <person name="Tapia R."/>
            <person name="Saunders E."/>
            <person name="Gilna P."/>
            <person name="Schmutz J."/>
            <person name="Larimer F."/>
            <person name="Land M."/>
            <person name="Kyrpides N."/>
            <person name="Anderson I."/>
            <person name="Richardson P."/>
        </authorList>
    </citation>
    <scope>NUCLEOTIDE SEQUENCE [LARGE SCALE GENOMIC DNA]</scope>
    <source>
        <strain>ATCC 51484 / DSM 6875 / VKM B-1610 / KT</strain>
    </source>
</reference>
<comment type="function">
    <text evidence="1">Accelerates the degradation of transcripts by removing pyrophosphate from the 5'-end of triphosphorylated RNA, leading to a more labile monophosphorylated state that can stimulate subsequent ribonuclease cleavage.</text>
</comment>
<comment type="cofactor">
    <cofactor evidence="1">
        <name>a divalent metal cation</name>
        <dbReference type="ChEBI" id="CHEBI:60240"/>
    </cofactor>
</comment>
<comment type="similarity">
    <text evidence="1">Belongs to the Nudix hydrolase family. RppH subfamily.</text>
</comment>
<name>RPPH_METFK</name>
<sequence>MIDRDGYRPNVGIILCNARNQVFWGKRIREHSWQFPQGGIKYGESPEQAMYRELMEEVGLRPEHVKILGRTRDWLRYDVPTNWIKREWRGSYRGQKQIWFLLRLIGRDSDVSLRASTHPEFDAWRWSDYWVAMDSVIEFKRDVYRMALKELSMHLTEHRRPRVAERVDQLVR</sequence>
<protein>
    <recommendedName>
        <fullName evidence="1">RNA pyrophosphohydrolase</fullName>
        <ecNumber evidence="1">3.6.1.-</ecNumber>
    </recommendedName>
    <alternativeName>
        <fullName evidence="1">(Di)nucleoside polyphosphate hydrolase</fullName>
    </alternativeName>
</protein>
<proteinExistence type="inferred from homology"/>
<gene>
    <name evidence="1" type="primary">rppH</name>
    <name evidence="1" type="synonym">nudH</name>
    <name type="ordered locus">Mfla_2123</name>
</gene>
<feature type="chain" id="PRO_1000021961" description="RNA pyrophosphohydrolase">
    <location>
        <begin position="1"/>
        <end position="172"/>
    </location>
</feature>
<feature type="domain" description="Nudix hydrolase" evidence="1">
    <location>
        <begin position="6"/>
        <end position="149"/>
    </location>
</feature>
<feature type="short sequence motif" description="Nudix box">
    <location>
        <begin position="38"/>
        <end position="59"/>
    </location>
</feature>
<accession>Q1GZE7</accession>
<keyword id="KW-0378">Hydrolase</keyword>
<keyword id="KW-1185">Reference proteome</keyword>
<evidence type="ECO:0000255" key="1">
    <source>
        <dbReference type="HAMAP-Rule" id="MF_00298"/>
    </source>
</evidence>